<dbReference type="EMBL" id="AY446894">
    <property type="protein sequence ID" value="AAR31616.1"/>
    <property type="molecule type" value="Genomic_DNA"/>
</dbReference>
<dbReference type="RefSeq" id="YP_081509.1">
    <property type="nucleotide sequence ID" value="NC_006273.2"/>
</dbReference>
<dbReference type="PDB" id="5D5N">
    <property type="method" value="X-ray"/>
    <property type="resolution" value="2.44 A"/>
    <property type="chains" value="A=1-175"/>
</dbReference>
<dbReference type="PDBsum" id="5D5N"/>
<dbReference type="SMR" id="Q6SW81"/>
<dbReference type="TCDB" id="9.A.82.1.1">
    <property type="family name" value="the viral nuclear egress complex (v-nec) family"/>
</dbReference>
<dbReference type="DNASU" id="3077439"/>
<dbReference type="GeneID" id="3077439"/>
<dbReference type="KEGG" id="vg:3077439"/>
<dbReference type="Reactome" id="R-HSA-9609690">
    <property type="pathway name" value="HCMV Early Events"/>
</dbReference>
<dbReference type="Reactome" id="R-HSA-9610379">
    <property type="pathway name" value="HCMV Late Events"/>
</dbReference>
<dbReference type="EvolutionaryTrace" id="Q6SW81"/>
<dbReference type="Proteomes" id="UP000000938">
    <property type="component" value="Segment"/>
</dbReference>
<dbReference type="GO" id="GO:0044201">
    <property type="term" value="C:host cell nuclear inner membrane"/>
    <property type="evidence" value="ECO:0007669"/>
    <property type="project" value="UniProtKB-SubCell"/>
</dbReference>
<dbReference type="GO" id="GO:0016020">
    <property type="term" value="C:membrane"/>
    <property type="evidence" value="ECO:0007669"/>
    <property type="project" value="UniProtKB-KW"/>
</dbReference>
<dbReference type="GO" id="GO:0019033">
    <property type="term" value="C:viral tegument"/>
    <property type="evidence" value="ECO:0000304"/>
    <property type="project" value="Reactome"/>
</dbReference>
<dbReference type="GO" id="GO:0046765">
    <property type="term" value="P:viral budding from nuclear membrane"/>
    <property type="evidence" value="ECO:0000314"/>
    <property type="project" value="UniProtKB"/>
</dbReference>
<dbReference type="HAMAP" id="MF_04024">
    <property type="entry name" value="HSV_NEC2"/>
    <property type="match status" value="1"/>
</dbReference>
<dbReference type="InterPro" id="IPR007626">
    <property type="entry name" value="Herpesvirus_viron_egress-type"/>
</dbReference>
<dbReference type="Pfam" id="PF04541">
    <property type="entry name" value="Herpes_U34"/>
    <property type="match status" value="1"/>
</dbReference>
<proteinExistence type="evidence at protein level"/>
<accession>Q6SW81</accession>
<accession>D2K3L8</accession>
<evidence type="ECO:0000250" key="1">
    <source>
        <dbReference type="UniProtKB" id="P16791"/>
    </source>
</evidence>
<evidence type="ECO:0000255" key="2">
    <source>
        <dbReference type="HAMAP-Rule" id="MF_04024"/>
    </source>
</evidence>
<evidence type="ECO:0000256" key="3">
    <source>
        <dbReference type="SAM" id="MobiDB-lite"/>
    </source>
</evidence>
<evidence type="ECO:0000269" key="4">
    <source>
    </source>
</evidence>
<evidence type="ECO:0000269" key="5">
    <source>
    </source>
</evidence>
<evidence type="ECO:0007744" key="6">
    <source>
        <dbReference type="PDB" id="5D5N"/>
    </source>
</evidence>
<evidence type="ECO:0007829" key="7">
    <source>
        <dbReference type="PDB" id="5D5N"/>
    </source>
</evidence>
<comment type="function">
    <text evidence="2 5">Plays an essential role in virion nuclear egress, the first step of virion release from infected cell. Within the host nucleus, NEC1 interacts with the newly formed capsid through the vertexes and directs it to the inner nuclear membrane by associating with NEC2. Induces the budding of the capsid at the inner nuclear membrane as well as its envelopment into the perinuclear space. There, the NEC1/NEC2 complex promotes the fusion of the enveloped capsid with the outer nuclear membrane and the subsequent release of the viral capsid into the cytoplasm where it will reach the secondary budding sites in the host Golgi or trans-Golgi network (By similarity). Inhibits host ISGylation and subsequent innate antiviral response by targeting host UBA7 for proteasomal degradation (PubMed:29743376).</text>
</comment>
<comment type="subunit">
    <text evidence="2 4 5">Forms a heterohexameric complex with NEC1. Interacts with host UBA7 and RNF170; this interaction promotes UBA7 proteasomal degradation (PubMed:29743376).</text>
</comment>
<comment type="subcellular location">
    <subcellularLocation>
        <location evidence="2 5">Host nucleus inner membrane</location>
        <topology evidence="2">Single-pass membrane protein</topology>
    </subcellularLocation>
    <text evidence="2">Also localizes at the transient membrane of perinuclear virions.</text>
</comment>
<comment type="PTM">
    <text evidence="1 2">Phosphorylated (By similarity). Phosphorylation by viral kinase UL97 at Ser-216 plays an important role for correct viral nuclear egress complex (NEC) localization (By similarity).</text>
</comment>
<comment type="similarity">
    <text evidence="2">Belongs to the herpesviridae NEC2 protein family.</text>
</comment>
<organismHost>
    <name type="scientific">Homo sapiens</name>
    <name type="common">Human</name>
    <dbReference type="NCBI Taxonomy" id="9606"/>
</organismHost>
<keyword id="KW-0002">3D-structure</keyword>
<keyword id="KW-1043">Host membrane</keyword>
<keyword id="KW-1048">Host nucleus</keyword>
<keyword id="KW-0426">Late protein</keyword>
<keyword id="KW-0472">Membrane</keyword>
<keyword id="KW-0597">Phosphoprotein</keyword>
<keyword id="KW-1185">Reference proteome</keyword>
<keyword id="KW-0812">Transmembrane</keyword>
<keyword id="KW-1133">Transmembrane helix</keyword>
<name>NEC2_HCMVM</name>
<sequence>MEMNKVLHQDLVQATRRILKLGPSELRVTDAGLICKNPNYSVCDAMLKTDTVYCVEYLLSYWESRTDHVPCFIFKNTGCAVSLCCFVRAPVKLVSPARHVGEFNVLKVNESLIVTLKDIEEIKPSAYGVLTKCVVRKSNSASVFNIELIAFGPENEGEYENLLRELYAKKAASTSLAVRNHVTVSSHSGSGPSLWRARMSAALTRTAGKRSPRTASPPPPPPRHPSCSPTMVAAGGAAAGPRPPPPPMAAGSWRLCRCEACMGRCGCASEGDADEEEEELLALAGEGKAAAAAAGQDIGGSARRPLEEHVSRRRGVSTHHRHPPSPPCTPSLERTGYRWAPSSWWRARSGPSRPQSGPWLPARFATLGPLVLALLLVLALLWRGHGQSSSPTRSAHRD</sequence>
<protein>
    <recommendedName>
        <fullName evidence="2">Nuclear egress protein 2</fullName>
    </recommendedName>
</protein>
<feature type="chain" id="PRO_0000416719" description="Nuclear egress protein 2">
    <location>
        <begin position="1"/>
        <end position="398"/>
    </location>
</feature>
<feature type="topological domain" description="Perinuclear space" evidence="2">
    <location>
        <begin position="1"/>
        <end position="359"/>
    </location>
</feature>
<feature type="transmembrane region" description="Helical" evidence="2">
    <location>
        <begin position="360"/>
        <end position="382"/>
    </location>
</feature>
<feature type="topological domain" description="Nuclear" evidence="2">
    <location>
        <begin position="383"/>
        <end position="398"/>
    </location>
</feature>
<feature type="region of interest" description="Disordered" evidence="3">
    <location>
        <begin position="202"/>
        <end position="246"/>
    </location>
</feature>
<feature type="region of interest" description="Disordered" evidence="3">
    <location>
        <begin position="306"/>
        <end position="334"/>
    </location>
</feature>
<feature type="compositionally biased region" description="Pro residues" evidence="3">
    <location>
        <begin position="215"/>
        <end position="224"/>
    </location>
</feature>
<feature type="compositionally biased region" description="Low complexity" evidence="3">
    <location>
        <begin position="225"/>
        <end position="240"/>
    </location>
</feature>
<feature type="compositionally biased region" description="Basic residues" evidence="3">
    <location>
        <begin position="311"/>
        <end position="323"/>
    </location>
</feature>
<feature type="modified residue" description="Phosphoserine" evidence="1">
    <location>
        <position position="216"/>
    </location>
</feature>
<feature type="helix" evidence="7">
    <location>
        <begin position="5"/>
        <end position="19"/>
    </location>
</feature>
<feature type="helix" evidence="7">
    <location>
        <begin position="23"/>
        <end position="25"/>
    </location>
</feature>
<feature type="strand" evidence="7">
    <location>
        <begin position="26"/>
        <end position="28"/>
    </location>
</feature>
<feature type="helix" evidence="7">
    <location>
        <begin position="31"/>
        <end position="36"/>
    </location>
</feature>
<feature type="strand" evidence="7">
    <location>
        <begin position="42"/>
        <end position="47"/>
    </location>
</feature>
<feature type="helix" evidence="7">
    <location>
        <begin position="55"/>
        <end position="66"/>
    </location>
</feature>
<feature type="strand" evidence="7">
    <location>
        <begin position="71"/>
        <end position="76"/>
    </location>
</feature>
<feature type="strand" evidence="7">
    <location>
        <begin position="81"/>
        <end position="88"/>
    </location>
</feature>
<feature type="strand" evidence="7">
    <location>
        <begin position="102"/>
        <end position="106"/>
    </location>
</feature>
<feature type="strand" evidence="7">
    <location>
        <begin position="111"/>
        <end position="114"/>
    </location>
</feature>
<feature type="helix" evidence="7">
    <location>
        <begin position="116"/>
        <end position="122"/>
    </location>
</feature>
<feature type="strand" evidence="7">
    <location>
        <begin position="126"/>
        <end position="128"/>
    </location>
</feature>
<feature type="strand" evidence="7">
    <location>
        <begin position="130"/>
        <end position="137"/>
    </location>
</feature>
<feature type="strand" evidence="7">
    <location>
        <begin position="139"/>
        <end position="142"/>
    </location>
</feature>
<feature type="strand" evidence="7">
    <location>
        <begin position="144"/>
        <end position="152"/>
    </location>
</feature>
<feature type="helix" evidence="7">
    <location>
        <begin position="156"/>
        <end position="169"/>
    </location>
</feature>
<reference key="1">
    <citation type="journal article" date="2004" name="J. Gen. Virol.">
        <title>Genetic content of wild-type human cytomegalovirus.</title>
        <authorList>
            <person name="Dolan A."/>
            <person name="Cunningham C."/>
            <person name="Hector R.D."/>
            <person name="Hassan-Walker A.F."/>
            <person name="Lee L."/>
            <person name="Addison C."/>
            <person name="Dargan D.J."/>
            <person name="McGeoch D.J."/>
            <person name="Gatherer D."/>
            <person name="Emery V.C."/>
            <person name="Griffiths P.D."/>
            <person name="Sinzger C."/>
            <person name="McSharry B.P."/>
            <person name="Wilkinson G.W.G."/>
            <person name="Davison A.J."/>
        </authorList>
    </citation>
    <scope>NUCLEOTIDE SEQUENCE [LARGE SCALE GENOMIC DNA]</scope>
</reference>
<reference key="2">
    <citation type="journal article" date="2018" name="J. Virol.">
        <title>Transmembrane Protein pUL50 of Human Cytomegalovirus Inhibits ISGylation by Downregulating UBE1L.</title>
        <authorList>
            <person name="Lee M.K."/>
            <person name="Kim Y.J."/>
            <person name="Kim Y.E."/>
            <person name="Han T.H."/>
            <person name="Milbradt J."/>
            <person name="Marschall M."/>
            <person name="Ahn J.H."/>
        </authorList>
    </citation>
    <scope>FUNCTION</scope>
    <scope>INTERACTION WITH HOST UBA7 AND RNF170</scope>
    <scope>SUBCELLULAR LOCATION</scope>
</reference>
<reference evidence="6" key="3">
    <citation type="journal article" date="2015" name="J. Biol. Chem.">
        <title>Crystal Structure of the Human Cytomegalovirus pUL50-pUL53 Core Nuclear Egress Complex Provides Insight into a Unique Assembly Scaffold for Virus-Host Protein Interactions.</title>
        <authorList>
            <person name="Walzer S.A."/>
            <person name="Egerer-Sieber C."/>
            <person name="Sticht H."/>
            <person name="Sevvana M."/>
            <person name="Hohl K."/>
            <person name="Milbradt J."/>
            <person name="Muller Y.A."/>
            <person name="Marschall M."/>
        </authorList>
    </citation>
    <scope>X-RAY CRYSTALLOGRAPHY (2.44 ANGSTROMS) OF 1-175</scope>
    <scope>INTERACTION WITH NEC1</scope>
</reference>
<organism>
    <name type="scientific">Human cytomegalovirus (strain Merlin)</name>
    <name type="common">HHV-5</name>
    <name type="synonym">Human herpesvirus 5</name>
    <dbReference type="NCBI Taxonomy" id="295027"/>
    <lineage>
        <taxon>Viruses</taxon>
        <taxon>Duplodnaviria</taxon>
        <taxon>Heunggongvirae</taxon>
        <taxon>Peploviricota</taxon>
        <taxon>Herviviricetes</taxon>
        <taxon>Herpesvirales</taxon>
        <taxon>Orthoherpesviridae</taxon>
        <taxon>Betaherpesvirinae</taxon>
        <taxon>Cytomegalovirus</taxon>
        <taxon>Cytomegalovirus humanbeta5</taxon>
        <taxon>Human cytomegalovirus</taxon>
    </lineage>
</organism>
<gene>
    <name evidence="2" type="primary">NEC2</name>
    <name type="ordered locus">UL50</name>
</gene>